<gene>
    <name type="primary">SPS1</name>
</gene>
<reference key="1">
    <citation type="journal article" date="1996" name="Mol. Gen. Genet.">
        <title>Cloning and molecular analysis of cDNAs encoding three sucrose phosphate synthase isoforms from a citrus fruit (Citrus unshiu Marc.).</title>
        <authorList>
            <person name="Komatsu A."/>
            <person name="Takanokura Y."/>
            <person name="Omura M."/>
            <person name="Akihama T."/>
        </authorList>
    </citation>
    <scope>NUCLEOTIDE SEQUENCE [MRNA]</scope>
    <source>
        <strain>cv. Miyagawa-Wase</strain>
        <tissue>Juice tissue</tissue>
    </source>
</reference>
<sequence length="1057" mass="117900">MAGNDWINSYLEAILDVGPGLDDAKSSLLLRERGRFSPTRYFVEEVITGFDETDLHRSWVKAQATRSPQERNTRLENMCWRIWNLARQKKQLEGEAAQRMAKRRLERERGRREATADMSEDLSEGEKGDIVSDVSAHGDSTRSRLPRISSVDAMETWISQQKGKKLYIVLISIHGLIRGENMELGRDSDTGGQVKYVVELARALGSMPGVYRVDLLTRQVSAPDVDWSYGEPTEMLTPRNSDDFMDDMGESSGAYIIRIPFGPKDKYIAKELLWPHIPEFVDGALNHIIRMSNVLGEQIGGGKPVWPVAIHGHYADAGDSAALLSGALNVPMLFTGHSLGRDKLEQLLKQARLSRDEINATYKIMRRIEAEELSLDASEIVITSTRQEIEEQWRLYDGFDPVLERKLRARIKRNVSCYGKFMPRMAIIPPGMEFHHIVPQDGDMDGETEGNEDNPASPDPPIWSEIMRFFTNPRKPVILALARPDPKKNITTLVKAFGECRPLRELANLTLIMGNRDGIDEMSSTSASVLLSVLKLIDKYDLYGQVAYPKHHKQSDVPEIYRLAAKTKGVFINPAFIEPFGLTLIEAAAHGLPIVATKNGGPVDIHRVLDNGLLVDPHDQQSIADALLKLVAGKQLWARCRQNGLKNIHLFSWPEHCKTYLSRIAGCKPRHPQWQRTDDGGETSESDSPGDSLRDIQDISLNLKFSLDGEKSGASGNDDSLDSEGNVADRKSRLENAVLAWSKGVLKDTRKSGSTDKVDQNTGAAKFPALRRRKHIFVISVDCDSTTGLLDATKKICEAVEKERTEGSIGFILSTSMTISEIHSFLVSGHLSPSDFDAFICNSGSDLYYSTLNSEDGPFVVDFYYHSHIEYRWGGEGLRKTLVRWASQVTDKKAESGEKVLTPAEQLSTNYCYAFSVQKPGMTPPVKELRKVLRIQALRCHVIYCQNGSRVNVIPVLASRSQALRYLYLRWGVELSKMVVFVGESGDTDYEGLLGGVHKTVILKGICSSSSNQIHANRSYPLSDVMPIDSPNIVQTPEDCTTSDIRSSLEQLGLLKV</sequence>
<protein>
    <recommendedName>
        <fullName>Probable sucrose-phosphate synthase 1</fullName>
        <ecNumber>2.4.1.14</ecNumber>
    </recommendedName>
    <alternativeName>
        <fullName>UDP-glucose-fructose-phosphate glucosyltransferase 1</fullName>
    </alternativeName>
</protein>
<evidence type="ECO:0000250" key="1"/>
<evidence type="ECO:0000256" key="2">
    <source>
        <dbReference type="SAM" id="MobiDB-lite"/>
    </source>
</evidence>
<evidence type="ECO:0000305" key="3"/>
<keyword id="KW-0328">Glycosyltransferase</keyword>
<keyword id="KW-0808">Transferase</keyword>
<comment type="function">
    <text evidence="1">Plays a role in photosynthetic sucrose synthesis by catalyzing the rate-limiting step of sucrose biosynthesis from UDP-glucose and fructose- 6-phosphate. Involved in the regulation of carbon partitioning in the leaves of plants. May regulate the synthesis of sucrose and therefore play a major role as a limiting factor in the export of photoassimilates out of the leaf. Plays a role for sucrose availability that is essential for plant growth and fiber elongation (By similarity).</text>
</comment>
<comment type="catalytic activity">
    <reaction>
        <text>beta-D-fructose 6-phosphate + UDP-alpha-D-glucose = sucrose 6(F)-phosphate + UDP + H(+)</text>
        <dbReference type="Rhea" id="RHEA:22172"/>
        <dbReference type="ChEBI" id="CHEBI:15378"/>
        <dbReference type="ChEBI" id="CHEBI:57634"/>
        <dbReference type="ChEBI" id="CHEBI:57723"/>
        <dbReference type="ChEBI" id="CHEBI:58223"/>
        <dbReference type="ChEBI" id="CHEBI:58885"/>
        <dbReference type="EC" id="2.4.1.14"/>
    </reaction>
</comment>
<comment type="activity regulation">
    <text evidence="1">Activity is regulated by phosphorylation and moderated by concentration of metabolites and light.</text>
</comment>
<comment type="pathway">
    <text>Glycan biosynthesis; sucrose biosynthesis; sucrose from D-fructose 6-phosphate and UDP-alpha-D-glucose: step 1/2.</text>
</comment>
<comment type="subunit">
    <text evidence="1">Homodimer or homotetramer.</text>
</comment>
<comment type="similarity">
    <text evidence="3">Belongs to the glycosyltransferase 1 family.</text>
</comment>
<proteinExistence type="evidence at transcript level"/>
<dbReference type="EC" id="2.4.1.14"/>
<dbReference type="EMBL" id="AB005023">
    <property type="protein sequence ID" value="BAA23213.1"/>
    <property type="molecule type" value="mRNA"/>
</dbReference>
<dbReference type="PIR" id="S72648">
    <property type="entry name" value="S72648"/>
</dbReference>
<dbReference type="SMR" id="O22060"/>
<dbReference type="CAZy" id="GT4">
    <property type="family name" value="Glycosyltransferase Family 4"/>
</dbReference>
<dbReference type="UniPathway" id="UPA00371">
    <property type="reaction ID" value="UER00545"/>
</dbReference>
<dbReference type="GO" id="GO:0046524">
    <property type="term" value="F:sucrose-phosphate synthase activity"/>
    <property type="evidence" value="ECO:0007669"/>
    <property type="project" value="UniProtKB-EC"/>
</dbReference>
<dbReference type="GO" id="GO:0005986">
    <property type="term" value="P:sucrose biosynthetic process"/>
    <property type="evidence" value="ECO:0007669"/>
    <property type="project" value="UniProtKB-UniPathway"/>
</dbReference>
<dbReference type="CDD" id="cd03800">
    <property type="entry name" value="GT4_sucrose_synthase"/>
    <property type="match status" value="1"/>
</dbReference>
<dbReference type="CDD" id="cd16419">
    <property type="entry name" value="HAD_SPS"/>
    <property type="match status" value="1"/>
</dbReference>
<dbReference type="FunFam" id="3.40.50.2000:FF:000112">
    <property type="entry name" value="Sucrose-phosphate synthase 1"/>
    <property type="match status" value="1"/>
</dbReference>
<dbReference type="FunFam" id="3.40.50.2000:FF:000077">
    <property type="entry name" value="Sucrose-phosphate synthase 2"/>
    <property type="match status" value="1"/>
</dbReference>
<dbReference type="Gene3D" id="3.90.1070.10">
    <property type="match status" value="1"/>
</dbReference>
<dbReference type="Gene3D" id="3.40.50.2000">
    <property type="entry name" value="Glycogen Phosphorylase B"/>
    <property type="match status" value="2"/>
</dbReference>
<dbReference type="Gene3D" id="3.40.50.1000">
    <property type="entry name" value="HAD superfamily/HAD-like"/>
    <property type="match status" value="1"/>
</dbReference>
<dbReference type="InterPro" id="IPR001296">
    <property type="entry name" value="Glyco_trans_1"/>
</dbReference>
<dbReference type="InterPro" id="IPR023214">
    <property type="entry name" value="HAD_sf"/>
</dbReference>
<dbReference type="InterPro" id="IPR006380">
    <property type="entry name" value="SPP-like_dom"/>
</dbReference>
<dbReference type="InterPro" id="IPR044161">
    <property type="entry name" value="SPS"/>
</dbReference>
<dbReference type="InterPro" id="IPR035659">
    <property type="entry name" value="SPS_C"/>
</dbReference>
<dbReference type="InterPro" id="IPR012819">
    <property type="entry name" value="SPS_pln"/>
</dbReference>
<dbReference type="InterPro" id="IPR000368">
    <property type="entry name" value="Sucrose_synth_GT-B1"/>
</dbReference>
<dbReference type="NCBIfam" id="TIGR02468">
    <property type="entry name" value="sucrsPsyn_pln"/>
    <property type="match status" value="1"/>
</dbReference>
<dbReference type="PANTHER" id="PTHR46039:SF2">
    <property type="entry name" value="SUCROSE-PHOSPHATE SYNTHASE 1"/>
    <property type="match status" value="1"/>
</dbReference>
<dbReference type="PANTHER" id="PTHR46039">
    <property type="entry name" value="SUCROSE-PHOSPHATE SYNTHASE 3-RELATED"/>
    <property type="match status" value="1"/>
</dbReference>
<dbReference type="Pfam" id="PF00534">
    <property type="entry name" value="Glycos_transf_1"/>
    <property type="match status" value="1"/>
</dbReference>
<dbReference type="Pfam" id="PF00862">
    <property type="entry name" value="GT-B_Sucrose_synth"/>
    <property type="match status" value="1"/>
</dbReference>
<dbReference type="Pfam" id="PF05116">
    <property type="entry name" value="S6PP"/>
    <property type="match status" value="1"/>
</dbReference>
<dbReference type="SUPFAM" id="SSF53756">
    <property type="entry name" value="UDP-Glycosyltransferase/glycogen phosphorylase"/>
    <property type="match status" value="1"/>
</dbReference>
<feature type="chain" id="PRO_0000204668" description="Probable sucrose-phosphate synthase 1">
    <location>
        <begin position="1"/>
        <end position="1057"/>
    </location>
</feature>
<feature type="region of interest" description="Disordered" evidence="2">
    <location>
        <begin position="103"/>
        <end position="143"/>
    </location>
</feature>
<feature type="region of interest" description="Disordered" evidence="2">
    <location>
        <begin position="439"/>
        <end position="459"/>
    </location>
</feature>
<feature type="region of interest" description="Disordered" evidence="2">
    <location>
        <begin position="670"/>
        <end position="693"/>
    </location>
</feature>
<feature type="compositionally biased region" description="Basic and acidic residues" evidence="2">
    <location>
        <begin position="103"/>
        <end position="115"/>
    </location>
</feature>
<feature type="compositionally biased region" description="Acidic residues" evidence="2">
    <location>
        <begin position="442"/>
        <end position="452"/>
    </location>
</feature>
<accession>O22060</accession>
<organism>
    <name type="scientific">Citrus unshiu</name>
    <name type="common">Satsuma mandarin</name>
    <name type="synonym">Citrus nobilis var. unshiu</name>
    <dbReference type="NCBI Taxonomy" id="55188"/>
    <lineage>
        <taxon>Eukaryota</taxon>
        <taxon>Viridiplantae</taxon>
        <taxon>Streptophyta</taxon>
        <taxon>Embryophyta</taxon>
        <taxon>Tracheophyta</taxon>
        <taxon>Spermatophyta</taxon>
        <taxon>Magnoliopsida</taxon>
        <taxon>eudicotyledons</taxon>
        <taxon>Gunneridae</taxon>
        <taxon>Pentapetalae</taxon>
        <taxon>rosids</taxon>
        <taxon>malvids</taxon>
        <taxon>Sapindales</taxon>
        <taxon>Rutaceae</taxon>
        <taxon>Aurantioideae</taxon>
        <taxon>Citrus</taxon>
    </lineage>
</organism>
<name>SPSA1_CITUN</name>